<reference key="1">
    <citation type="journal article" date="2010" name="PLoS ONE">
        <title>Genome sequence of Cronobacter sakazakii BAA-894 and comparative genomic hybridization analysis with other Cronobacter species.</title>
        <authorList>
            <person name="Kucerova E."/>
            <person name="Clifton S.W."/>
            <person name="Xia X.Q."/>
            <person name="Long F."/>
            <person name="Porwollik S."/>
            <person name="Fulton L."/>
            <person name="Fronick C."/>
            <person name="Minx P."/>
            <person name="Kyung K."/>
            <person name="Warren W."/>
            <person name="Fulton R."/>
            <person name="Feng D."/>
            <person name="Wollam A."/>
            <person name="Shah N."/>
            <person name="Bhonagiri V."/>
            <person name="Nash W.E."/>
            <person name="Hallsworth-Pepin K."/>
            <person name="Wilson R.K."/>
            <person name="McClelland M."/>
            <person name="Forsythe S.J."/>
        </authorList>
    </citation>
    <scope>NUCLEOTIDE SEQUENCE [LARGE SCALE GENOMIC DNA]</scope>
    <source>
        <strain>ATCC BAA-894</strain>
    </source>
</reference>
<dbReference type="EMBL" id="CP000783">
    <property type="protein sequence ID" value="ABU75332.1"/>
    <property type="molecule type" value="Genomic_DNA"/>
</dbReference>
<dbReference type="RefSeq" id="WP_000358956.1">
    <property type="nucleotide sequence ID" value="NC_009778.1"/>
</dbReference>
<dbReference type="SMR" id="A7MPG6"/>
<dbReference type="GeneID" id="93035747"/>
<dbReference type="KEGG" id="esa:ESA_00023"/>
<dbReference type="HOGENOM" id="CLU_098841_0_1_6"/>
<dbReference type="Proteomes" id="UP000000260">
    <property type="component" value="Chromosome"/>
</dbReference>
<dbReference type="GO" id="GO:0022625">
    <property type="term" value="C:cytosolic large ribosomal subunit"/>
    <property type="evidence" value="ECO:0007669"/>
    <property type="project" value="TreeGrafter"/>
</dbReference>
<dbReference type="GO" id="GO:0008097">
    <property type="term" value="F:5S rRNA binding"/>
    <property type="evidence" value="ECO:0007669"/>
    <property type="project" value="TreeGrafter"/>
</dbReference>
<dbReference type="GO" id="GO:0003735">
    <property type="term" value="F:structural constituent of ribosome"/>
    <property type="evidence" value="ECO:0007669"/>
    <property type="project" value="InterPro"/>
</dbReference>
<dbReference type="GO" id="GO:0006412">
    <property type="term" value="P:translation"/>
    <property type="evidence" value="ECO:0007669"/>
    <property type="project" value="UniProtKB-UniRule"/>
</dbReference>
<dbReference type="CDD" id="cd00432">
    <property type="entry name" value="Ribosomal_L18_L5e"/>
    <property type="match status" value="1"/>
</dbReference>
<dbReference type="FunFam" id="3.30.420.100:FF:000001">
    <property type="entry name" value="50S ribosomal protein L18"/>
    <property type="match status" value="1"/>
</dbReference>
<dbReference type="Gene3D" id="3.30.420.100">
    <property type="match status" value="1"/>
</dbReference>
<dbReference type="HAMAP" id="MF_01337_B">
    <property type="entry name" value="Ribosomal_uL18_B"/>
    <property type="match status" value="1"/>
</dbReference>
<dbReference type="InterPro" id="IPR004389">
    <property type="entry name" value="Ribosomal_uL18_bac-type"/>
</dbReference>
<dbReference type="InterPro" id="IPR005484">
    <property type="entry name" value="Ribosomal_uL18_bac/euk"/>
</dbReference>
<dbReference type="NCBIfam" id="TIGR00060">
    <property type="entry name" value="L18_bact"/>
    <property type="match status" value="1"/>
</dbReference>
<dbReference type="PANTHER" id="PTHR12899">
    <property type="entry name" value="39S RIBOSOMAL PROTEIN L18, MITOCHONDRIAL"/>
    <property type="match status" value="1"/>
</dbReference>
<dbReference type="PANTHER" id="PTHR12899:SF3">
    <property type="entry name" value="LARGE RIBOSOMAL SUBUNIT PROTEIN UL18M"/>
    <property type="match status" value="1"/>
</dbReference>
<dbReference type="Pfam" id="PF00861">
    <property type="entry name" value="Ribosomal_L18p"/>
    <property type="match status" value="1"/>
</dbReference>
<dbReference type="SUPFAM" id="SSF53137">
    <property type="entry name" value="Translational machinery components"/>
    <property type="match status" value="1"/>
</dbReference>
<sequence length="117" mass="12770">MDKKSARIRRATRARRKLKELGATRLVVHRTPRHIYAQVIAPNGSEVLVAASTVEKAIAEQLKYTGNKDAAAAVGKAVAERALEKGIKDVSFDRSGFQYHGRVQALADAAREAGLQF</sequence>
<feature type="chain" id="PRO_1000053023" description="Large ribosomal subunit protein uL18">
    <location>
        <begin position="1"/>
        <end position="117"/>
    </location>
</feature>
<organism>
    <name type="scientific">Cronobacter sakazakii (strain ATCC BAA-894)</name>
    <name type="common">Enterobacter sakazakii</name>
    <dbReference type="NCBI Taxonomy" id="290339"/>
    <lineage>
        <taxon>Bacteria</taxon>
        <taxon>Pseudomonadati</taxon>
        <taxon>Pseudomonadota</taxon>
        <taxon>Gammaproteobacteria</taxon>
        <taxon>Enterobacterales</taxon>
        <taxon>Enterobacteriaceae</taxon>
        <taxon>Cronobacter</taxon>
    </lineage>
</organism>
<evidence type="ECO:0000255" key="1">
    <source>
        <dbReference type="HAMAP-Rule" id="MF_01337"/>
    </source>
</evidence>
<evidence type="ECO:0000305" key="2"/>
<protein>
    <recommendedName>
        <fullName evidence="1">Large ribosomal subunit protein uL18</fullName>
    </recommendedName>
    <alternativeName>
        <fullName evidence="2">50S ribosomal protein L18</fullName>
    </alternativeName>
</protein>
<comment type="function">
    <text evidence="1">This is one of the proteins that bind and probably mediate the attachment of the 5S RNA into the large ribosomal subunit, where it forms part of the central protuberance.</text>
</comment>
<comment type="subunit">
    <text evidence="1">Part of the 50S ribosomal subunit; part of the 5S rRNA/L5/L18/L25 subcomplex. Contacts the 5S and 23S rRNAs.</text>
</comment>
<comment type="similarity">
    <text evidence="1">Belongs to the universal ribosomal protein uL18 family.</text>
</comment>
<proteinExistence type="inferred from homology"/>
<accession>A7MPG6</accession>
<name>RL18_CROS8</name>
<keyword id="KW-1185">Reference proteome</keyword>
<keyword id="KW-0687">Ribonucleoprotein</keyword>
<keyword id="KW-0689">Ribosomal protein</keyword>
<keyword id="KW-0694">RNA-binding</keyword>
<keyword id="KW-0699">rRNA-binding</keyword>
<gene>
    <name evidence="1" type="primary">rplR</name>
    <name type="ordered locus">ESA_00023</name>
</gene>